<name>NDNF_DANRE</name>
<reference key="1">
    <citation type="journal article" date="2013" name="Nature">
        <title>The zebrafish reference genome sequence and its relationship to the human genome.</title>
        <authorList>
            <person name="Howe K."/>
            <person name="Clark M.D."/>
            <person name="Torroja C.F."/>
            <person name="Torrance J."/>
            <person name="Berthelot C."/>
            <person name="Muffato M."/>
            <person name="Collins J.E."/>
            <person name="Humphray S."/>
            <person name="McLaren K."/>
            <person name="Matthews L."/>
            <person name="McLaren S."/>
            <person name="Sealy I."/>
            <person name="Caccamo M."/>
            <person name="Churcher C."/>
            <person name="Scott C."/>
            <person name="Barrett J.C."/>
            <person name="Koch R."/>
            <person name="Rauch G.J."/>
            <person name="White S."/>
            <person name="Chow W."/>
            <person name="Kilian B."/>
            <person name="Quintais L.T."/>
            <person name="Guerra-Assuncao J.A."/>
            <person name="Zhou Y."/>
            <person name="Gu Y."/>
            <person name="Yen J."/>
            <person name="Vogel J.H."/>
            <person name="Eyre T."/>
            <person name="Redmond S."/>
            <person name="Banerjee R."/>
            <person name="Chi J."/>
            <person name="Fu B."/>
            <person name="Langley E."/>
            <person name="Maguire S.F."/>
            <person name="Laird G.K."/>
            <person name="Lloyd D."/>
            <person name="Kenyon E."/>
            <person name="Donaldson S."/>
            <person name="Sehra H."/>
            <person name="Almeida-King J."/>
            <person name="Loveland J."/>
            <person name="Trevanion S."/>
            <person name="Jones M."/>
            <person name="Quail M."/>
            <person name="Willey D."/>
            <person name="Hunt A."/>
            <person name="Burton J."/>
            <person name="Sims S."/>
            <person name="McLay K."/>
            <person name="Plumb B."/>
            <person name="Davis J."/>
            <person name="Clee C."/>
            <person name="Oliver K."/>
            <person name="Clark R."/>
            <person name="Riddle C."/>
            <person name="Elliot D."/>
            <person name="Threadgold G."/>
            <person name="Harden G."/>
            <person name="Ware D."/>
            <person name="Begum S."/>
            <person name="Mortimore B."/>
            <person name="Kerry G."/>
            <person name="Heath P."/>
            <person name="Phillimore B."/>
            <person name="Tracey A."/>
            <person name="Corby N."/>
            <person name="Dunn M."/>
            <person name="Johnson C."/>
            <person name="Wood J."/>
            <person name="Clark S."/>
            <person name="Pelan S."/>
            <person name="Griffiths G."/>
            <person name="Smith M."/>
            <person name="Glithero R."/>
            <person name="Howden P."/>
            <person name="Barker N."/>
            <person name="Lloyd C."/>
            <person name="Stevens C."/>
            <person name="Harley J."/>
            <person name="Holt K."/>
            <person name="Panagiotidis G."/>
            <person name="Lovell J."/>
            <person name="Beasley H."/>
            <person name="Henderson C."/>
            <person name="Gordon D."/>
            <person name="Auger K."/>
            <person name="Wright D."/>
            <person name="Collins J."/>
            <person name="Raisen C."/>
            <person name="Dyer L."/>
            <person name="Leung K."/>
            <person name="Robertson L."/>
            <person name="Ambridge K."/>
            <person name="Leongamornlert D."/>
            <person name="McGuire S."/>
            <person name="Gilderthorp R."/>
            <person name="Griffiths C."/>
            <person name="Manthravadi D."/>
            <person name="Nichol S."/>
            <person name="Barker G."/>
            <person name="Whitehead S."/>
            <person name="Kay M."/>
            <person name="Brown J."/>
            <person name="Murnane C."/>
            <person name="Gray E."/>
            <person name="Humphries M."/>
            <person name="Sycamore N."/>
            <person name="Barker D."/>
            <person name="Saunders D."/>
            <person name="Wallis J."/>
            <person name="Babbage A."/>
            <person name="Hammond S."/>
            <person name="Mashreghi-Mohammadi M."/>
            <person name="Barr L."/>
            <person name="Martin S."/>
            <person name="Wray P."/>
            <person name="Ellington A."/>
            <person name="Matthews N."/>
            <person name="Ellwood M."/>
            <person name="Woodmansey R."/>
            <person name="Clark G."/>
            <person name="Cooper J."/>
            <person name="Tromans A."/>
            <person name="Grafham D."/>
            <person name="Skuce C."/>
            <person name="Pandian R."/>
            <person name="Andrews R."/>
            <person name="Harrison E."/>
            <person name="Kimberley A."/>
            <person name="Garnett J."/>
            <person name="Fosker N."/>
            <person name="Hall R."/>
            <person name="Garner P."/>
            <person name="Kelly D."/>
            <person name="Bird C."/>
            <person name="Palmer S."/>
            <person name="Gehring I."/>
            <person name="Berger A."/>
            <person name="Dooley C.M."/>
            <person name="Ersan-Urun Z."/>
            <person name="Eser C."/>
            <person name="Geiger H."/>
            <person name="Geisler M."/>
            <person name="Karotki L."/>
            <person name="Kirn A."/>
            <person name="Konantz J."/>
            <person name="Konantz M."/>
            <person name="Oberlander M."/>
            <person name="Rudolph-Geiger S."/>
            <person name="Teucke M."/>
            <person name="Lanz C."/>
            <person name="Raddatz G."/>
            <person name="Osoegawa K."/>
            <person name="Zhu B."/>
            <person name="Rapp A."/>
            <person name="Widaa S."/>
            <person name="Langford C."/>
            <person name="Yang F."/>
            <person name="Schuster S.C."/>
            <person name="Carter N.P."/>
            <person name="Harrow J."/>
            <person name="Ning Z."/>
            <person name="Herrero J."/>
            <person name="Searle S.M."/>
            <person name="Enright A."/>
            <person name="Geisler R."/>
            <person name="Plasterk R.H."/>
            <person name="Lee C."/>
            <person name="Westerfield M."/>
            <person name="de Jong P.J."/>
            <person name="Zon L.I."/>
            <person name="Postlethwait J.H."/>
            <person name="Nusslein-Volhard C."/>
            <person name="Hubbard T.J."/>
            <person name="Roest Crollius H."/>
            <person name="Rogers J."/>
            <person name="Stemple D.L."/>
        </authorList>
    </citation>
    <scope>NUCLEOTIDE SEQUENCE [LARGE SCALE GENOMIC DNA]</scope>
    <source>
        <strain>Tuebingen</strain>
    </source>
</reference>
<reference key="2">
    <citation type="journal article" date="2020" name="Am. J. Hum. Genet.">
        <title>Neuron-derived neurotrophic factor is mutated in congenital hypogonadotropic hypogonadism.</title>
        <authorList>
            <person name="Messina A."/>
            <person name="Pulli K."/>
            <person name="Santini S."/>
            <person name="Acierno J."/>
            <person name="Kaensaekoski J."/>
            <person name="Cassatella D."/>
            <person name="Xu C."/>
            <person name="Casoni F."/>
            <person name="Malone S.A."/>
            <person name="Ternier G."/>
            <person name="Conte D."/>
            <person name="Sidis Y."/>
            <person name="Tommiska J."/>
            <person name="Vaaralahti K."/>
            <person name="Dwyer A."/>
            <person name="Gothilf Y."/>
            <person name="Merlo G.R."/>
            <person name="Santoni F."/>
            <person name="Niederlaender N.J."/>
            <person name="Giacobini P."/>
            <person name="Raivio T."/>
            <person name="Pitteloud N."/>
        </authorList>
    </citation>
    <scope>FUNCTION</scope>
    <scope>DISRUPTION PHENOTYPE</scope>
</reference>
<comment type="function">
    <text evidence="1 2 5">Secretory protein that plays a role in various cellular processes. Acts as a chemorepellent acting on gonadotropin-releasing hormone (GnRH) expressing neurons regulating their migration to the hypothalamus (PubMed:31883645). Also promotes neuron migration, growth and survival as well as neurite outgrowth and is involved in the development of the olfactory system. May also act through the regulation of growth factors activity and downstream signaling (By similarity). Also regulates extracellular matrix assembly and cell adhesiveness (By similarity). Promotes endothelial cell survival, vessel formation and plays an important role in the process of revascularization through NOS3-dependent mechanisms (By similarity).</text>
</comment>
<comment type="subcellular location">
    <subcellularLocation>
        <location evidence="1">Secreted</location>
    </subcellularLocation>
</comment>
<comment type="disruption phenotype">
    <text evidence="5">Morpholino knockdown of the protein alters the migration of gonadotropin-releasing hormone (GnRH) expressing neurons.</text>
</comment>
<gene>
    <name type="primary">ndnf</name>
</gene>
<organism>
    <name type="scientific">Danio rerio</name>
    <name type="common">Zebrafish</name>
    <name type="synonym">Brachydanio rerio</name>
    <dbReference type="NCBI Taxonomy" id="7955"/>
    <lineage>
        <taxon>Eukaryota</taxon>
        <taxon>Metazoa</taxon>
        <taxon>Chordata</taxon>
        <taxon>Craniata</taxon>
        <taxon>Vertebrata</taxon>
        <taxon>Euteleostomi</taxon>
        <taxon>Actinopterygii</taxon>
        <taxon>Neopterygii</taxon>
        <taxon>Teleostei</taxon>
        <taxon>Ostariophysi</taxon>
        <taxon>Cypriniformes</taxon>
        <taxon>Danionidae</taxon>
        <taxon>Danioninae</taxon>
        <taxon>Danio</taxon>
    </lineage>
</organism>
<sequence>MTWRCGCYGLVLLVLGVMGQKLPTRDEGLFQMQIRDKAQFHDSSVMPDGAEISGYLFRDTPKRYYFVVEEDNTPLLVTVTPCDAPLEWRLTLQELPEDRSGEGSGEPEPLEQQKQQVTANEGTELFTYKGNDVESFISSSSPSGLYQLEIISTEKDSNFKIYSTTTPESDQPYPELPYDPRVDVTALGRTTVTLAWKPTPTGSVMGQPIQYCVVINKEHNFKSLCAAEAKMSLDDAFMIAPKPGRDFSPFDFAYFGFVPSENDFHKDRFLTTNRALSNKMSRAYIPKPKVADIQKICIGNKNIFTITDLKPDTQYYFDVFAVNTGTNMSTAYVGTFARTKEEAKQKTVELKDGKVTDVFVKRKGSKFLRFAPVSSHQRVTLFVHACLDAVQVQVRRDGKLVLSQNVEGVRQFQLRGKPKAKYLIRLRGSRKGASTLKVLASTRAGGKQPFPALPEDTRIKAFDKLRTCSSVTVAWLGTQERNKYCVYRREVSESYGEEHRRREQNQCSGPESRRKSEKVLCKYFYSANLQKAVTTETITGLEAGKSYLLDVYVVGHSGHSVKYQSKLVKTRKYC</sequence>
<dbReference type="EMBL" id="CABZ01060120">
    <property type="status" value="NOT_ANNOTATED_CDS"/>
    <property type="molecule type" value="Genomic_DNA"/>
</dbReference>
<dbReference type="EMBL" id="CABZ01060121">
    <property type="status" value="NOT_ANNOTATED_CDS"/>
    <property type="molecule type" value="Genomic_DNA"/>
</dbReference>
<dbReference type="EMBL" id="CABZ01060125">
    <property type="status" value="NOT_ANNOTATED_CDS"/>
    <property type="molecule type" value="Genomic_DNA"/>
</dbReference>
<dbReference type="EMBL" id="LO017828">
    <property type="status" value="NOT_ANNOTATED_CDS"/>
    <property type="molecule type" value="Genomic_DNA"/>
</dbReference>
<dbReference type="RefSeq" id="NP_001410712.1">
    <property type="nucleotide sequence ID" value="NM_001423783.1"/>
</dbReference>
<dbReference type="RefSeq" id="XP_689934.5">
    <property type="nucleotide sequence ID" value="XM_684842.8"/>
</dbReference>
<dbReference type="FunCoup" id="F1QPX0">
    <property type="interactions" value="491"/>
</dbReference>
<dbReference type="GlyCosmos" id="F1QPX0">
    <property type="glycosylation" value="1 site, No reported glycans"/>
</dbReference>
<dbReference type="Ensembl" id="ENSDART00000091532">
    <property type="protein sequence ID" value="ENSDARP00000085965"/>
    <property type="gene ID" value="ENSDARG00000062936"/>
</dbReference>
<dbReference type="GeneID" id="561437"/>
<dbReference type="eggNOG" id="KOG4806">
    <property type="taxonomic scope" value="Eukaryota"/>
</dbReference>
<dbReference type="HOGENOM" id="CLU_041753_0_0_1"/>
<dbReference type="InParanoid" id="F1QPX0"/>
<dbReference type="OrthoDB" id="9872501at2759"/>
<dbReference type="TreeFam" id="TF313245"/>
<dbReference type="PRO" id="PR:F1QPX0"/>
<dbReference type="Proteomes" id="UP000000437">
    <property type="component" value="Chromosome 23"/>
</dbReference>
<dbReference type="Bgee" id="ENSDARG00000062936">
    <property type="expression patterns" value="Expressed in tail bud paraxial mesoderm and 29 other cell types or tissues"/>
</dbReference>
<dbReference type="ExpressionAtlas" id="F1QPX0">
    <property type="expression patterns" value="baseline"/>
</dbReference>
<dbReference type="GO" id="GO:0005576">
    <property type="term" value="C:extracellular region"/>
    <property type="evidence" value="ECO:0007669"/>
    <property type="project" value="UniProtKB-SubCell"/>
</dbReference>
<dbReference type="GO" id="GO:0008201">
    <property type="term" value="F:heparin binding"/>
    <property type="evidence" value="ECO:0000318"/>
    <property type="project" value="GO_Central"/>
</dbReference>
<dbReference type="GO" id="GO:0044344">
    <property type="term" value="P:cellular response to fibroblast growth factor stimulus"/>
    <property type="evidence" value="ECO:0000250"/>
    <property type="project" value="UniProtKB"/>
</dbReference>
<dbReference type="GO" id="GO:0048702">
    <property type="term" value="P:embryonic neurocranium morphogenesis"/>
    <property type="evidence" value="ECO:0000315"/>
    <property type="project" value="ZFIN"/>
</dbReference>
<dbReference type="GO" id="GO:0030198">
    <property type="term" value="P:extracellular matrix organization"/>
    <property type="evidence" value="ECO:0000318"/>
    <property type="project" value="GO_Central"/>
</dbReference>
<dbReference type="GO" id="GO:0021828">
    <property type="term" value="P:gonadotrophin-releasing hormone neuronal migration to the hypothalamus"/>
    <property type="evidence" value="ECO:0000315"/>
    <property type="project" value="UniProtKB"/>
</dbReference>
<dbReference type="CDD" id="cd00063">
    <property type="entry name" value="FN3"/>
    <property type="match status" value="1"/>
</dbReference>
<dbReference type="Gene3D" id="2.60.40.10">
    <property type="entry name" value="Immunoglobulins"/>
    <property type="match status" value="1"/>
</dbReference>
<dbReference type="InterPro" id="IPR003961">
    <property type="entry name" value="FN3_dom"/>
</dbReference>
<dbReference type="InterPro" id="IPR036116">
    <property type="entry name" value="FN3_sf"/>
</dbReference>
<dbReference type="InterPro" id="IPR013783">
    <property type="entry name" value="Ig-like_fold"/>
</dbReference>
<dbReference type="InterPro" id="IPR019326">
    <property type="entry name" value="NDNF"/>
</dbReference>
<dbReference type="InterPro" id="IPR045805">
    <property type="entry name" value="NDNF_C"/>
</dbReference>
<dbReference type="InterPro" id="IPR055271">
    <property type="entry name" value="NDNF_Fn(III)_1"/>
</dbReference>
<dbReference type="InterPro" id="IPR056225">
    <property type="entry name" value="NDNF_N"/>
</dbReference>
<dbReference type="PANTHER" id="PTHR14619">
    <property type="entry name" value="NEURON-DERIVED NEUROTROPHIC FACTOR"/>
    <property type="match status" value="1"/>
</dbReference>
<dbReference type="PANTHER" id="PTHR14619:SF1">
    <property type="entry name" value="PROTEIN NDNF"/>
    <property type="match status" value="1"/>
</dbReference>
<dbReference type="Pfam" id="PF10179">
    <property type="entry name" value="NDNF"/>
    <property type="match status" value="1"/>
</dbReference>
<dbReference type="Pfam" id="PF19433">
    <property type="entry name" value="NDNF_C"/>
    <property type="match status" value="1"/>
</dbReference>
<dbReference type="Pfam" id="PF24354">
    <property type="entry name" value="NDNF_N"/>
    <property type="match status" value="1"/>
</dbReference>
<dbReference type="SMART" id="SM00060">
    <property type="entry name" value="FN3"/>
    <property type="match status" value="2"/>
</dbReference>
<dbReference type="SUPFAM" id="SSF49265">
    <property type="entry name" value="Fibronectin type III"/>
    <property type="match status" value="1"/>
</dbReference>
<protein>
    <recommendedName>
        <fullName evidence="6">Protein NDNF</fullName>
    </recommendedName>
</protein>
<accession>F1QPX0</accession>
<keyword id="KW-0325">Glycoprotein</keyword>
<keyword id="KW-0524">Neurogenesis</keyword>
<keyword id="KW-1185">Reference proteome</keyword>
<keyword id="KW-0677">Repeat</keyword>
<keyword id="KW-0964">Secreted</keyword>
<keyword id="KW-0732">Signal</keyword>
<proteinExistence type="inferred from homology"/>
<feature type="signal peptide" evidence="3">
    <location>
        <begin position="1"/>
        <end position="19"/>
    </location>
</feature>
<feature type="chain" id="PRO_5006466061" description="Protein NDNF" evidence="3">
    <location>
        <begin position="20"/>
        <end position="574"/>
    </location>
</feature>
<feature type="domain" description="Fibronectin type-III 1" evidence="3">
    <location>
        <begin position="174"/>
        <end position="329"/>
    </location>
</feature>
<feature type="domain" description="Fibronectin type-III 2" evidence="3">
    <location>
        <begin position="451"/>
        <end position="560"/>
    </location>
</feature>
<feature type="region of interest" description="Disordered" evidence="4">
    <location>
        <begin position="97"/>
        <end position="118"/>
    </location>
</feature>
<feature type="glycosylation site" description="N-linked (GlcNAc...) asparagine" evidence="3">
    <location>
        <position position="327"/>
    </location>
</feature>
<evidence type="ECO:0000250" key="1">
    <source>
        <dbReference type="UniProtKB" id="Q8C119"/>
    </source>
</evidence>
<evidence type="ECO:0000250" key="2">
    <source>
        <dbReference type="UniProtKB" id="Q8TB73"/>
    </source>
</evidence>
<evidence type="ECO:0000255" key="3"/>
<evidence type="ECO:0000256" key="4">
    <source>
        <dbReference type="SAM" id="MobiDB-lite"/>
    </source>
</evidence>
<evidence type="ECO:0000269" key="5">
    <source>
    </source>
</evidence>
<evidence type="ECO:0000305" key="6"/>